<comment type="function">
    <text evidence="1 2">Constant region of immunoglobulin heavy chains. Immunoglobulins, also known as antibodies, are membrane-bound or secreted glycoproteins produced by B lymphocytes. In the recognition phase of humoral immunity, the membrane-bound immunoglobulins serve as receptors which, upon binding of a specific antigen, trigger the clonal expansion and differentiation of B lymphocytes into immunoglobulins-secreting plasma cells. Secreted immunoglobulins mediate the effector phase of humoral immunity, which results in the elimination of bound antigens. The antigen binding site is formed by the variable domain of one heavy chain, together with that of its associated light chain. Thus, each immunoglobulin has two antigen binding sites with remarkable affinity for a particular antigen. The variable domains are assembled by a process called V-(D)-J rearrangement and can then be subjected to somatic hypermutations which, after exposure to antigen and selection, allow affinity maturation for a particular antigen. Ig alpha is the major immunoglobulin class in body secretions.</text>
</comment>
<comment type="subunit">
    <text evidence="1 2">Immunoglobulins are composed of two identical heavy chains and two identical light chains; disulfide-linked. Monomeric or polymeric. Part of the secretory IgA (sIgA) complex that consists of two, four or five IgA monomers, and two additional non-Ig polypeptides, namely the JCHAIN and the secretory component (the proteolytic product of PIGR).</text>
</comment>
<comment type="subcellular location">
    <subcellularLocation>
        <location evidence="4 5">Secreted</location>
    </subcellularLocation>
    <subcellularLocation>
        <location evidence="1 2">Cell membrane</location>
    </subcellularLocation>
</comment>
<comment type="PTM">
    <text evidence="5">N-glycosylated. N-glycans attached to Asn-134 varies from differentially fucosylated complex and hybrid to sialylated with N-glycoyl neuraminic acid types: GlcNAc2Man3GlcNAc2(Fuc); GlcNAc1Man4GlcNAc2(Fuc); GlcNAc1Man4GlcNAc2; Gal1GlcNAc2Man3GlcNAc2(Fuc); GlcNAc2Man3GlcNAc2; Gal1GlcNAc2Man3GlcNAc2; GlcNAc1Man3GlcNAc2; GlcNAc1Man2GlcNAc2 and NeuGc1Gal1GlcNAc2Man3GlcNAc2(Fuc). N-glycans attached to Asn-333 are mainly fucosylated complex types: GlcNAc2Man3GlcNAc2; GlcNAc1Man3GlcNAc2; GlcNAc1Man3GlcNAc2(Fuc); GlcNAc2Man3GlcNAc2(Fuc); Gal1GlcNAc2Man3GlcNAc2(Fuc); NeuGc1Gal1GlcNAc1Man3GlcNAc2(Fuc); NeuGc1Gal1GlcNAc2Man3GlcNAc2(Fuc) and NeuAc1Gal1GlcNAc2Man3GlcNAc2(Fuc).</text>
</comment>
<dbReference type="SMR" id="P0DUB3"/>
<dbReference type="GlyCosmos" id="P0DUB3">
    <property type="glycosylation" value="2 sites, No reported glycans"/>
</dbReference>
<dbReference type="iPTMnet" id="P0DUB3"/>
<dbReference type="Proteomes" id="UP000694387">
    <property type="component" value="Unplaced"/>
</dbReference>
<dbReference type="GO" id="GO:0005576">
    <property type="term" value="C:extracellular region"/>
    <property type="evidence" value="ECO:0007669"/>
    <property type="project" value="UniProtKB-SubCell"/>
</dbReference>
<dbReference type="GO" id="GO:0019814">
    <property type="term" value="C:immunoglobulin complex"/>
    <property type="evidence" value="ECO:0007669"/>
    <property type="project" value="UniProtKB-KW"/>
</dbReference>
<dbReference type="GO" id="GO:0005886">
    <property type="term" value="C:plasma membrane"/>
    <property type="evidence" value="ECO:0007669"/>
    <property type="project" value="UniProtKB-SubCell"/>
</dbReference>
<dbReference type="GO" id="GO:0002250">
    <property type="term" value="P:adaptive immune response"/>
    <property type="evidence" value="ECO:0007669"/>
    <property type="project" value="UniProtKB-KW"/>
</dbReference>
<dbReference type="CDD" id="cd04986">
    <property type="entry name" value="IgC1_CH2_IgA"/>
    <property type="match status" value="1"/>
</dbReference>
<dbReference type="CDD" id="cd05768">
    <property type="entry name" value="IgC1_CH3_IgAGD_CH4_IgAEM"/>
    <property type="match status" value="1"/>
</dbReference>
<dbReference type="FunFam" id="2.60.40.10:FF:002016">
    <property type="entry name" value="Immunoglobulin heavy constant alpha 2"/>
    <property type="match status" value="1"/>
</dbReference>
<dbReference type="FunFam" id="2.60.40.10:FF:000998">
    <property type="entry name" value="Immunoglobulin heavy constant epsilon"/>
    <property type="match status" value="1"/>
</dbReference>
<dbReference type="FunFam" id="2.60.40.10:FF:000463">
    <property type="entry name" value="Immunoglobulin heavy constant gamma 1"/>
    <property type="match status" value="1"/>
</dbReference>
<dbReference type="Gene3D" id="2.60.40.10">
    <property type="entry name" value="Immunoglobulins"/>
    <property type="match status" value="3"/>
</dbReference>
<dbReference type="InterPro" id="IPR007110">
    <property type="entry name" value="Ig-like_dom"/>
</dbReference>
<dbReference type="InterPro" id="IPR036179">
    <property type="entry name" value="Ig-like_dom_sf"/>
</dbReference>
<dbReference type="InterPro" id="IPR013783">
    <property type="entry name" value="Ig-like_fold"/>
</dbReference>
<dbReference type="InterPro" id="IPR003006">
    <property type="entry name" value="Ig/MHC_CS"/>
</dbReference>
<dbReference type="InterPro" id="IPR003597">
    <property type="entry name" value="Ig_C1-set"/>
</dbReference>
<dbReference type="InterPro" id="IPR050380">
    <property type="entry name" value="Immune_Resp_Modulators"/>
</dbReference>
<dbReference type="PANTHER" id="PTHR23411">
    <property type="entry name" value="TAPASIN"/>
    <property type="match status" value="1"/>
</dbReference>
<dbReference type="Pfam" id="PF07654">
    <property type="entry name" value="C1-set"/>
    <property type="match status" value="3"/>
</dbReference>
<dbReference type="SMART" id="SM00407">
    <property type="entry name" value="IGc1"/>
    <property type="match status" value="3"/>
</dbReference>
<dbReference type="SUPFAM" id="SSF48726">
    <property type="entry name" value="Immunoglobulin"/>
    <property type="match status" value="3"/>
</dbReference>
<dbReference type="PROSITE" id="PS50835">
    <property type="entry name" value="IG_LIKE"/>
    <property type="match status" value="3"/>
</dbReference>
<dbReference type="PROSITE" id="PS00290">
    <property type="entry name" value="IG_MHC"/>
    <property type="match status" value="2"/>
</dbReference>
<keyword id="KW-1064">Adaptive immunity</keyword>
<keyword id="KW-1003">Cell membrane</keyword>
<keyword id="KW-0903">Direct protein sequencing</keyword>
<keyword id="KW-1015">Disulfide bond</keyword>
<keyword id="KW-0325">Glycoprotein</keyword>
<keyword id="KW-0391">Immunity</keyword>
<keyword id="KW-1280">Immunoglobulin</keyword>
<keyword id="KW-0393">Immunoglobulin domain</keyword>
<keyword id="KW-0472">Membrane</keyword>
<keyword id="KW-1185">Reference proteome</keyword>
<keyword id="KW-0677">Repeat</keyword>
<keyword id="KW-0964">Secreted</keyword>
<accession>P0DUB3</accession>
<gene>
    <name type="primary">IGHA</name>
</gene>
<proteinExistence type="evidence at protein level"/>
<sequence length="346" mass="37322">ASVTSPSIFPLSLRKADSGDPVVIACLIKGFFPLGFPEPVKVTWGKSGVVTNYLPSEAGGLYTVISQLSLRADQCPDDASVKCEVQHYTSPSKSVDVPCIVCPPPPPCPCECLLSTVPRLSLSPPAEDLLLSSNASLTCTLRGLRDPKGATFTWSPSSGNVPVLQEPKLEPSGCYSVSSVLPGCAEPWSKKETFSCTASHPELKKSQTVSITKPKEPLFQPQVHVLPPPSEELALNELVTLTCLVRGFSPKEVLVLWLQGHEKLPREKYLVFKPLREPGQSVPTFAVTSLLRVEAEAWLRGDVFSCMVGHEALPLSFTQKSIDRLSGKPTHVNVSVVMAEADGTCY</sequence>
<protein>
    <recommendedName>
        <fullName>Immunoglobulin heavy constant alpha</fullName>
    </recommendedName>
    <alternativeName>
        <fullName evidence="6">Ig alpha chain C region</fullName>
    </alternativeName>
    <alternativeName>
        <fullName evidence="6">IgA constant region</fullName>
    </alternativeName>
</protein>
<reference key="1">
    <citation type="journal article" date="2020" name="Int. J. Biol. Macromol.">
        <title>Sequence characterization and N-glycoproteomics of secretory immunoglobulin A from donkey milk.</title>
        <authorList>
            <person name="Gnanesh Kumar B.S."/>
            <person name="Rawal A."/>
        </authorList>
    </citation>
    <scope>IDENTIFICATION BY MASS SPECTROMETRY</scope>
    <scope>GLYCOSYLATION AT ASN-134 AND ASN-333</scope>
    <scope>SUBCELLULAR LOCATION</scope>
</reference>
<reference key="2">
    <citation type="journal article" date="2011" name="J. Proteomics">
        <title>Poppea's bath liquor: the secret proteome of she-donkey's milk.</title>
        <authorList>
            <person name="Cunsolo V."/>
            <person name="Muccilli V."/>
            <person name="Fasoli E."/>
            <person name="Saletti R."/>
            <person name="Righetti P.G."/>
            <person name="Foti S."/>
        </authorList>
    </citation>
    <scope>PROTEIN SEQUENCE OF 15-41; 252-263; 267-276; 300-320 AND 325-346</scope>
    <scope>IDENTIFICATION BY MASS SPECTROMETRY</scope>
    <scope>SUBCELLULAR LOCATION</scope>
</reference>
<name>IGHA_EQUAS</name>
<evidence type="ECO:0000250" key="1">
    <source>
        <dbReference type="UniProtKB" id="P01876"/>
    </source>
</evidence>
<evidence type="ECO:0000250" key="2">
    <source>
        <dbReference type="UniProtKB" id="P01877"/>
    </source>
</evidence>
<evidence type="ECO:0000255" key="3">
    <source>
        <dbReference type="PROSITE-ProRule" id="PRU00114"/>
    </source>
</evidence>
<evidence type="ECO:0000269" key="4">
    <source>
    </source>
</evidence>
<evidence type="ECO:0000269" key="5">
    <source>
    </source>
</evidence>
<evidence type="ECO:0000303" key="6">
    <source>
    </source>
</evidence>
<organism>
    <name type="scientific">Equus asinus</name>
    <name type="common">Donkey</name>
    <name type="synonym">Equus africanus asinus</name>
    <dbReference type="NCBI Taxonomy" id="9793"/>
    <lineage>
        <taxon>Eukaryota</taxon>
        <taxon>Metazoa</taxon>
        <taxon>Chordata</taxon>
        <taxon>Craniata</taxon>
        <taxon>Vertebrata</taxon>
        <taxon>Euteleostomi</taxon>
        <taxon>Mammalia</taxon>
        <taxon>Eutheria</taxon>
        <taxon>Laurasiatheria</taxon>
        <taxon>Perissodactyla</taxon>
        <taxon>Equidae</taxon>
        <taxon>Equus</taxon>
    </lineage>
</organism>
<feature type="chain" id="PRO_0000451038" description="Immunoglobulin heavy constant alpha">
    <location>
        <begin position="1" status="less than"/>
        <end position="346"/>
    </location>
</feature>
<feature type="domain" description="Ig-like 1" evidence="3">
    <location>
        <begin position="6"/>
        <end position="96"/>
    </location>
</feature>
<feature type="domain" description="Ig-like 2" evidence="3">
    <location>
        <begin position="118"/>
        <end position="212"/>
    </location>
</feature>
<feature type="domain" description="Ig-like 3" evidence="3">
    <location>
        <begin position="221"/>
        <end position="323"/>
    </location>
</feature>
<feature type="glycosylation site" description="N-linked (GlcNAc...) (complex) asparagine" evidence="5">
    <location>
        <position position="134"/>
    </location>
</feature>
<feature type="glycosylation site" description="N-linked (GlcNAc...) (complex) asparagine" evidence="5">
    <location>
        <position position="333"/>
    </location>
</feature>
<feature type="disulfide bond" evidence="3">
    <location>
        <begin position="26"/>
        <end position="83"/>
    </location>
</feature>
<feature type="disulfide bond" evidence="3">
    <location>
        <begin position="139"/>
        <end position="196"/>
    </location>
</feature>
<feature type="disulfide bond" description="Interchain (with heavy chain)" evidence="1 2">
    <location>
        <position position="174"/>
    </location>
</feature>
<feature type="disulfide bond" description="Interchain (with heavy chain of another subunit) (or with C-505 of PIGR/the secretory component)" evidence="1 2">
    <location>
        <position position="184"/>
    </location>
</feature>
<feature type="disulfide bond" evidence="3">
    <location>
        <begin position="243"/>
        <end position="306"/>
    </location>
</feature>
<feature type="disulfide bond" description="Interchain (with J chain); in oligomeric form" evidence="1 2">
    <location>
        <position position="345"/>
    </location>
</feature>
<feature type="non-terminal residue">
    <location>
        <position position="1"/>
    </location>
</feature>